<sequence length="639" mass="71418">MTDGHHFNNILLGGRGGTNPGQFKVHSGGLAWKRQGGGKTIEIDKADVTAVTWMKVPRAYQLGVRIKAGLFYRFIGFREQDVSNLTNFIQKNMGVTPDEKQLSVSGQNWGGIDIDGNMLTFMVGSKQAFEVSLPDVAQTQMQGKTDVLLELHVDDTTGANEKDSLMDLSFHVPTSNTQFVGDESRPPAHILWETILKFADVGSSEEPVVTFEGIAILTPRGRYSVELHLSFLRLQGQANDFKIQYSSIVRLFLLPKSNNPHTFVVITLDPPIRKGQTLYPHIVIQFETEAVVERDLALSKELLVEKYKDRLEESYKGLIHEVFTKVLRGLSGAKVTRPGSFRSCQDGYAVKSSLKAEDGLLYPLEKGFFFLPKPPTLILHEEIEFVEFERHGAGGASISSHYFDLLVKLKNDQEHLFRNIQRNEYHNLFNFINGKNIKIMNLGGDGQGASGVVTDVLRDTDDDAVDPHLERIKNQAGDEESDEEDEDFVADKDDSGSPTDDSGDEESDASDSGGEKEKSSKKEASSSKPVQKRKHKARDDEGQEKKKPKKKKDPNAPKRAMTPFMYFSMAERGNMKSSNPDLPTTEIAKKLGEMWQKMSGEEKQPYIQQAQVDKKRYEKESAVYRGEATVDVDSGNESD</sequence>
<accession>Q9LEF5</accession>
<feature type="chain" id="PRO_0000245195" description="FACT complex subunit SSRP1">
    <location>
        <begin position="1"/>
        <end position="639"/>
    </location>
</feature>
<feature type="DNA-binding region" description="HMG box" evidence="2">
    <location>
        <begin position="557"/>
        <end position="625"/>
    </location>
</feature>
<feature type="region of interest" description="Disordered" evidence="3">
    <location>
        <begin position="460"/>
        <end position="561"/>
    </location>
</feature>
<feature type="compositionally biased region" description="Acidic residues" evidence="3">
    <location>
        <begin position="477"/>
        <end position="488"/>
    </location>
</feature>
<feature type="compositionally biased region" description="Basic and acidic residues" evidence="3">
    <location>
        <begin position="513"/>
        <end position="525"/>
    </location>
</feature>
<feature type="modified residue" description="Phosphoserine; by CK2" evidence="7">
    <location>
        <position position="634"/>
    </location>
</feature>
<feature type="modified residue" description="Phosphoserine; by CK2" evidence="7">
    <location>
        <position position="638"/>
    </location>
</feature>
<reference key="1">
    <citation type="journal article" date="2000" name="Plant J.">
        <title>DNA-interactions and nuclear localisation of the chromosomal HMG domain protein SSRP1 from maize.</title>
        <authorList>
            <person name="Roettgers K."/>
            <person name="Krohn N.M."/>
            <person name="Lichota J."/>
            <person name="Stemmer C."/>
            <person name="Merkle T."/>
            <person name="Grasser K.D."/>
        </authorList>
    </citation>
    <scope>NUCLEOTIDE SEQUENCE [MRNA]</scope>
    <scope>SUBCELLULAR LOCATION</scope>
    <scope>DNA-BINDING</scope>
    <scope>TISSUE SPECIFICITY</scope>
</reference>
<reference key="2">
    <citation type="journal article" date="2001" name="Biochemistry">
        <title>Differential chromatin association and nucleosome binding of the maize HMGA, HMGB, and SSRP1 proteins.</title>
        <authorList>
            <person name="Lichota J."/>
            <person name="Grasser K.D."/>
        </authorList>
    </citation>
    <scope>DNA-BINDING</scope>
</reference>
<reference key="3">
    <citation type="journal article" date="2003" name="J. Biol. Chem.">
        <title>Protein kinase CK2 phosphorylates the high mobility group domain protein SSRP1, inducing the recognition of UV-damaged DNA.</title>
        <authorList>
            <person name="Krohn N.M."/>
            <person name="Stemmer C."/>
            <person name="Fojan P."/>
            <person name="Grimm R."/>
            <person name="Grasser K.D."/>
        </authorList>
    </citation>
    <scope>PHOSPHORYLATION AT SER-634 AND SER-638</scope>
</reference>
<name>SSRP1_MAIZE</name>
<gene>
    <name type="primary">SSRP1</name>
</gene>
<proteinExistence type="evidence at protein level"/>
<dbReference type="EMBL" id="AJ244017">
    <property type="protein sequence ID" value="CAB96421.1"/>
    <property type="molecule type" value="mRNA"/>
</dbReference>
<dbReference type="SMR" id="Q9LEF5"/>
<dbReference type="FunCoup" id="Q9LEF5">
    <property type="interactions" value="3967"/>
</dbReference>
<dbReference type="STRING" id="4577.Q9LEF5"/>
<dbReference type="iPTMnet" id="Q9LEF5"/>
<dbReference type="PaxDb" id="4577-GRMZM2G032252_P02"/>
<dbReference type="MaizeGDB" id="411236"/>
<dbReference type="eggNOG" id="KOG0526">
    <property type="taxonomic scope" value="Eukaryota"/>
</dbReference>
<dbReference type="InParanoid" id="Q9LEF5"/>
<dbReference type="Proteomes" id="UP000007305">
    <property type="component" value="Unplaced"/>
</dbReference>
<dbReference type="ExpressionAtlas" id="Q9LEF5">
    <property type="expression patterns" value="baseline and differential"/>
</dbReference>
<dbReference type="GO" id="GO:0035101">
    <property type="term" value="C:FACT complex"/>
    <property type="evidence" value="ECO:0000318"/>
    <property type="project" value="GO_Central"/>
</dbReference>
<dbReference type="GO" id="GO:0003677">
    <property type="term" value="F:DNA binding"/>
    <property type="evidence" value="ECO:0007669"/>
    <property type="project" value="UniProtKB-KW"/>
</dbReference>
<dbReference type="GO" id="GO:0042393">
    <property type="term" value="F:histone binding"/>
    <property type="evidence" value="ECO:0000318"/>
    <property type="project" value="GO_Central"/>
</dbReference>
<dbReference type="GO" id="GO:0031491">
    <property type="term" value="F:nucleosome binding"/>
    <property type="evidence" value="ECO:0000318"/>
    <property type="project" value="GO_Central"/>
</dbReference>
<dbReference type="GO" id="GO:0006281">
    <property type="term" value="P:DNA repair"/>
    <property type="evidence" value="ECO:0007669"/>
    <property type="project" value="UniProtKB-KW"/>
</dbReference>
<dbReference type="GO" id="GO:0006260">
    <property type="term" value="P:DNA replication"/>
    <property type="evidence" value="ECO:0007669"/>
    <property type="project" value="UniProtKB-KW"/>
</dbReference>
<dbReference type="CDD" id="cd00084">
    <property type="entry name" value="HMG-box_SF"/>
    <property type="match status" value="1"/>
</dbReference>
<dbReference type="CDD" id="cd13230">
    <property type="entry name" value="PH1_SSRP1-like"/>
    <property type="match status" value="1"/>
</dbReference>
<dbReference type="CDD" id="cd13231">
    <property type="entry name" value="PH2_SSRP1-like"/>
    <property type="match status" value="1"/>
</dbReference>
<dbReference type="FunFam" id="1.10.30.10:FF:000016">
    <property type="entry name" value="FACT complex subunit SSRP1"/>
    <property type="match status" value="1"/>
</dbReference>
<dbReference type="FunFam" id="2.30.29.220:FF:000002">
    <property type="entry name" value="FACT complex subunit SSRP1"/>
    <property type="match status" value="1"/>
</dbReference>
<dbReference type="FunFam" id="2.30.29.30:FF:000214">
    <property type="entry name" value="FACT complex subunit SSRP1"/>
    <property type="match status" value="1"/>
</dbReference>
<dbReference type="FunFam" id="2.30.29.30:FF:000298">
    <property type="entry name" value="FACT complex subunit SSRP1"/>
    <property type="match status" value="1"/>
</dbReference>
<dbReference type="FunFam" id="2.30.29.150:FF:000001">
    <property type="entry name" value="Fact complex subunit ssrp1"/>
    <property type="match status" value="1"/>
</dbReference>
<dbReference type="Gene3D" id="2.30.29.150">
    <property type="match status" value="1"/>
</dbReference>
<dbReference type="Gene3D" id="1.10.30.10">
    <property type="entry name" value="High mobility group box domain"/>
    <property type="match status" value="1"/>
</dbReference>
<dbReference type="Gene3D" id="2.30.29.30">
    <property type="entry name" value="Pleckstrin-homology domain (PH domain)/Phosphotyrosine-binding domain (PTB)"/>
    <property type="match status" value="2"/>
</dbReference>
<dbReference type="Gene3D" id="2.30.29.220">
    <property type="entry name" value="Structure-specific recognition protein (SSRP1)"/>
    <property type="match status" value="1"/>
</dbReference>
<dbReference type="InterPro" id="IPR009071">
    <property type="entry name" value="HMG_box_dom"/>
</dbReference>
<dbReference type="InterPro" id="IPR036910">
    <property type="entry name" value="HMG_box_dom_sf"/>
</dbReference>
<dbReference type="InterPro" id="IPR011993">
    <property type="entry name" value="PH-like_dom_sf"/>
</dbReference>
<dbReference type="InterPro" id="IPR013719">
    <property type="entry name" value="RTT106/SPT16-like_middle_dom"/>
</dbReference>
<dbReference type="InterPro" id="IPR050454">
    <property type="entry name" value="RTT106/SSRP1_HistChap/FACT"/>
</dbReference>
<dbReference type="InterPro" id="IPR048993">
    <property type="entry name" value="SSRP1-like_PH1"/>
</dbReference>
<dbReference type="InterPro" id="IPR000969">
    <property type="entry name" value="SSRP1/POB3"/>
</dbReference>
<dbReference type="InterPro" id="IPR035417">
    <property type="entry name" value="SSRP1/POB3_N"/>
</dbReference>
<dbReference type="InterPro" id="IPR024954">
    <property type="entry name" value="SSRP1_DD"/>
</dbReference>
<dbReference type="InterPro" id="IPR038167">
    <property type="entry name" value="SSRP1_sf"/>
</dbReference>
<dbReference type="PANTHER" id="PTHR45849">
    <property type="entry name" value="FACT COMPLEX SUBUNIT SSRP1"/>
    <property type="match status" value="1"/>
</dbReference>
<dbReference type="PANTHER" id="PTHR45849:SF1">
    <property type="entry name" value="FACT COMPLEX SUBUNIT SSRP1"/>
    <property type="match status" value="1"/>
</dbReference>
<dbReference type="Pfam" id="PF00505">
    <property type="entry name" value="HMG_box"/>
    <property type="match status" value="1"/>
</dbReference>
<dbReference type="Pfam" id="PF21103">
    <property type="entry name" value="PH1_SSRP1-like"/>
    <property type="match status" value="1"/>
</dbReference>
<dbReference type="Pfam" id="PF17292">
    <property type="entry name" value="POB3_N"/>
    <property type="match status" value="1"/>
</dbReference>
<dbReference type="Pfam" id="PF08512">
    <property type="entry name" value="Rttp106-like_middle"/>
    <property type="match status" value="1"/>
</dbReference>
<dbReference type="Pfam" id="PF03531">
    <property type="entry name" value="SSrecog"/>
    <property type="match status" value="1"/>
</dbReference>
<dbReference type="PRINTS" id="PR00887">
    <property type="entry name" value="SSRCOGNITION"/>
</dbReference>
<dbReference type="SMART" id="SM00398">
    <property type="entry name" value="HMG"/>
    <property type="match status" value="1"/>
</dbReference>
<dbReference type="SMART" id="SM01287">
    <property type="entry name" value="Rtt106"/>
    <property type="match status" value="1"/>
</dbReference>
<dbReference type="SUPFAM" id="SSF47095">
    <property type="entry name" value="HMG-box"/>
    <property type="match status" value="1"/>
</dbReference>
<dbReference type="SUPFAM" id="SSF50729">
    <property type="entry name" value="PH domain-like"/>
    <property type="match status" value="1"/>
</dbReference>
<dbReference type="PROSITE" id="PS50118">
    <property type="entry name" value="HMG_BOX_2"/>
    <property type="match status" value="1"/>
</dbReference>
<evidence type="ECO:0000250" key="1"/>
<evidence type="ECO:0000255" key="2">
    <source>
        <dbReference type="PROSITE-ProRule" id="PRU00267"/>
    </source>
</evidence>
<evidence type="ECO:0000256" key="3">
    <source>
        <dbReference type="SAM" id="MobiDB-lite"/>
    </source>
</evidence>
<evidence type="ECO:0000269" key="4">
    <source>
    </source>
</evidence>
<evidence type="ECO:0000269" key="5">
    <source>
    </source>
</evidence>
<evidence type="ECO:0000305" key="6"/>
<evidence type="ECO:0000305" key="7">
    <source>
    </source>
</evidence>
<organism>
    <name type="scientific">Zea mays</name>
    <name type="common">Maize</name>
    <dbReference type="NCBI Taxonomy" id="4577"/>
    <lineage>
        <taxon>Eukaryota</taxon>
        <taxon>Viridiplantae</taxon>
        <taxon>Streptophyta</taxon>
        <taxon>Embryophyta</taxon>
        <taxon>Tracheophyta</taxon>
        <taxon>Spermatophyta</taxon>
        <taxon>Magnoliopsida</taxon>
        <taxon>Liliopsida</taxon>
        <taxon>Poales</taxon>
        <taxon>Poaceae</taxon>
        <taxon>PACMAD clade</taxon>
        <taxon>Panicoideae</taxon>
        <taxon>Andropogonodae</taxon>
        <taxon>Andropogoneae</taxon>
        <taxon>Tripsacinae</taxon>
        <taxon>Zea</taxon>
    </lineage>
</organism>
<keyword id="KW-0158">Chromosome</keyword>
<keyword id="KW-0227">DNA damage</keyword>
<keyword id="KW-0234">DNA repair</keyword>
<keyword id="KW-0235">DNA replication</keyword>
<keyword id="KW-0238">DNA-binding</keyword>
<keyword id="KW-0539">Nucleus</keyword>
<keyword id="KW-0597">Phosphoprotein</keyword>
<keyword id="KW-1185">Reference proteome</keyword>
<keyword id="KW-0804">Transcription</keyword>
<keyword id="KW-0805">Transcription regulation</keyword>
<protein>
    <recommendedName>
        <fullName>FACT complex subunit SSRP1</fullName>
    </recommendedName>
    <alternativeName>
        <fullName>Facilitates chromatin transcription complex subunit SSRP1</fullName>
    </alternativeName>
    <alternativeName>
        <fullName>Recombination signal sequence recognition protein 1</fullName>
    </alternativeName>
    <alternativeName>
        <fullName>Zm-SSRP1</fullName>
    </alternativeName>
</protein>
<comment type="function">
    <text evidence="1">Component of the FACT complex, a general chromatin factor that acts to reorganize nucleosomes. The FACT complex is involved in multiple processes that require DNA as a template such as mRNA elongation, DNA replication and DNA repair. During transcription elongation the FACT complex acts as a histone chaperone that both destabilizes and restores nucleosomal structure. It facilitates the passage of RNA polymerase II and transcription by promoting the dissociation of one histone H2A-H2B dimer from the nucleosome, then subsequently promotes the reestablishment of the nucleosome following the passage of RNA polymerase II (By similarity). Binds specifically to double-stranded DNA.</text>
</comment>
<comment type="subunit">
    <text evidence="1">Component of the FACT complex, a stable heterodimer of SPT16 and SSRP1.</text>
</comment>
<comment type="subcellular location">
    <subcellularLocation>
        <location evidence="2 4">Nucleus</location>
    </subcellularLocation>
    <subcellularLocation>
        <location evidence="4">Chromosome</location>
    </subcellularLocation>
</comment>
<comment type="tissue specificity">
    <text evidence="4">Present in leaves and kernels, but not in roots.</text>
</comment>
<comment type="PTM">
    <text evidence="5">Phosphorylated by CK2 following UV but not gamma irradiation.</text>
</comment>
<comment type="similarity">
    <text evidence="6">Belongs to the SSRP1 family.</text>
</comment>